<protein>
    <recommendedName>
        <fullName evidence="1">Protein TIC 214</fullName>
    </recommendedName>
    <alternativeName>
        <fullName evidence="1">Translocon at the inner envelope membrane of chloroplasts 214</fullName>
        <shortName evidence="1">AtTIC214</shortName>
    </alternativeName>
</protein>
<comment type="function">
    <text evidence="1">Involved in protein precursor import into chloroplasts. May be part of an intermediate translocation complex acting as a protein-conducting channel at the inner envelope.</text>
</comment>
<comment type="subunit">
    <text evidence="1">Part of the Tic complex.</text>
</comment>
<comment type="subcellular location">
    <subcellularLocation>
        <location evidence="1">Plastid</location>
        <location evidence="1">Chloroplast inner membrane</location>
        <topology evidence="2">Multi-pass membrane protein</topology>
    </subcellularLocation>
</comment>
<comment type="similarity">
    <text evidence="4">Belongs to the TIC214 family.</text>
</comment>
<geneLocation type="chloroplast"/>
<dbReference type="EMBL" id="AJ879453">
    <property type="protein sequence ID" value="CAI53852.1"/>
    <property type="molecule type" value="Genomic_DNA"/>
</dbReference>
<dbReference type="RefSeq" id="YP_319821.1">
    <property type="nucleotide sequence ID" value="NC_007407.1"/>
</dbReference>
<dbReference type="GeneID" id="3677395"/>
<dbReference type="GO" id="GO:0009706">
    <property type="term" value="C:chloroplast inner membrane"/>
    <property type="evidence" value="ECO:0007669"/>
    <property type="project" value="UniProtKB-SubCell"/>
</dbReference>
<dbReference type="GO" id="GO:0015031">
    <property type="term" value="P:protein transport"/>
    <property type="evidence" value="ECO:0007669"/>
    <property type="project" value="UniProtKB-KW"/>
</dbReference>
<dbReference type="InterPro" id="IPR008896">
    <property type="entry name" value="TIC214"/>
</dbReference>
<dbReference type="PANTHER" id="PTHR33163:SF40">
    <property type="entry name" value="PROTEIN TIC 214"/>
    <property type="match status" value="1"/>
</dbReference>
<dbReference type="PANTHER" id="PTHR33163">
    <property type="entry name" value="PROTEIN TIC 214-RELATED"/>
    <property type="match status" value="1"/>
</dbReference>
<dbReference type="Pfam" id="PF05758">
    <property type="entry name" value="Ycf1"/>
    <property type="match status" value="2"/>
</dbReference>
<reference key="1">
    <citation type="journal article" date="2005" name="Mol. Biol. Evol.">
        <title>Analysis of Acorus calamus chloroplast genome and its phylogenetic implications.</title>
        <authorList>
            <person name="Goremykin V.V."/>
            <person name="Holland B."/>
            <person name="Hirsch-Ernst K.I."/>
            <person name="Hellwig F.H."/>
        </authorList>
    </citation>
    <scope>NUCLEOTIDE SEQUENCE [LARGE SCALE GENOMIC DNA]</scope>
</reference>
<keyword id="KW-0150">Chloroplast</keyword>
<keyword id="KW-0472">Membrane</keyword>
<keyword id="KW-0934">Plastid</keyword>
<keyword id="KW-1001">Plastid inner membrane</keyword>
<keyword id="KW-0653">Protein transport</keyword>
<keyword id="KW-0812">Transmembrane</keyword>
<keyword id="KW-1133">Transmembrane helix</keyword>
<keyword id="KW-0813">Transport</keyword>
<proteinExistence type="inferred from homology"/>
<feature type="chain" id="PRO_0000262599" description="Protein TIC 214">
    <location>
        <begin position="1"/>
        <end position="1913"/>
    </location>
</feature>
<feature type="transmembrane region" description="Helical" evidence="2">
    <location>
        <begin position="18"/>
        <end position="38"/>
    </location>
</feature>
<feature type="transmembrane region" description="Helical" evidence="2">
    <location>
        <begin position="58"/>
        <end position="80"/>
    </location>
</feature>
<feature type="transmembrane region" description="Helical" evidence="2">
    <location>
        <begin position="84"/>
        <end position="103"/>
    </location>
</feature>
<feature type="transmembrane region" description="Helical" evidence="2">
    <location>
        <begin position="124"/>
        <end position="144"/>
    </location>
</feature>
<feature type="transmembrane region" description="Helical" evidence="2">
    <location>
        <begin position="172"/>
        <end position="192"/>
    </location>
</feature>
<feature type="transmembrane region" description="Helical" evidence="2">
    <location>
        <begin position="214"/>
        <end position="234"/>
    </location>
</feature>
<feature type="region of interest" description="Disordered" evidence="3">
    <location>
        <begin position="245"/>
        <end position="330"/>
    </location>
</feature>
<feature type="region of interest" description="Disordered" evidence="3">
    <location>
        <begin position="707"/>
        <end position="734"/>
    </location>
</feature>
<feature type="region of interest" description="Disordered" evidence="3">
    <location>
        <begin position="1605"/>
        <end position="1652"/>
    </location>
</feature>
<feature type="compositionally biased region" description="Basic and acidic residues" evidence="3">
    <location>
        <begin position="260"/>
        <end position="289"/>
    </location>
</feature>
<feature type="compositionally biased region" description="Acidic residues" evidence="3">
    <location>
        <begin position="303"/>
        <end position="314"/>
    </location>
</feature>
<feature type="compositionally biased region" description="Basic and acidic residues" evidence="3">
    <location>
        <begin position="315"/>
        <end position="330"/>
    </location>
</feature>
<feature type="compositionally biased region" description="Low complexity" evidence="3">
    <location>
        <begin position="718"/>
        <end position="729"/>
    </location>
</feature>
<gene>
    <name evidence="1" type="primary">TIC214</name>
    <name type="synonym">ycf1</name>
</gene>
<organism>
    <name type="scientific">Acorus calamus</name>
    <name type="common">Sweet flag</name>
    <dbReference type="NCBI Taxonomy" id="4465"/>
    <lineage>
        <taxon>Eukaryota</taxon>
        <taxon>Viridiplantae</taxon>
        <taxon>Streptophyta</taxon>
        <taxon>Embryophyta</taxon>
        <taxon>Tracheophyta</taxon>
        <taxon>Spermatophyta</taxon>
        <taxon>Magnoliopsida</taxon>
        <taxon>Liliopsida</taxon>
        <taxon>Acoraceae</taxon>
        <taxon>Acorus</taxon>
    </lineage>
</organism>
<sequence length="1913" mass="226803">MIFKSFLLGNLGSLYIKIINSVVVVGLYYGFLTTFSIGPSYFFLLRARIMEEGTEREVSATTGFITGQLMMFISIYYAPLHLALGRPHTITVLVIPYLLFHFFSNNQKQFFDYGSTTRNSMRNLSIQCVFLTNLIFQLFNHLMLPSSTLARLVNIYMFRCNNKMLFVTSSFVGWLIGHILFMKWVGLVVSWIRQNHSIRSNVLIRSNKYLGLKLKSAIAQILSIIFFIACVNYLARLPDPSVTKKLNETSKTETEEEESKESQKSKESEEERDVEKETTSETKETKQEQEGSTEQDPSPYWEEKEDPDKIDETEEIRVNGKEKKKDETEEIRVNGKEKKKDEFRFHFKETDYKRSPGYENSYLDGYQDNWDLQSEEEEEEESTLGFEKPLVTCLFDYKRWNRPFRYIKNKTFENAIRDEMSQYFFYTCLNNGKKKISFTYPPSLATFSEIIERKMSLYTTKKLTDDDLYSHWVSNNEEKKNNLSNELINRIKVLDKGSLAPDVLEKRTRLCDDENEQECLPKKYDPLLNGSYRGRIKKLESESTRNDSIISAKGSLEKIWKNKIHSLITNDSREFEHQMDPFDGESLSAYMTHSLTSISKLSLELVSIFHFEDLALLTEQKRIDFENQTKRLKFLFDVITADANNQTIENKFIEIEKIDKKIPRWVYKLISEEDYLAQQEQQEEENEEEAPLDFGIRSRKGRRVVIYTDKNQNRDQDPNPNTDNTTTENDNSDTGEEIALIRYAQQSDFSRDLINGSIRAKRRKIVLWEMLQANAHSPLFLDQVAKMVSFDLFDDLRETMNLIFRNWITKEPELQILDSEEKEDREKLIKIREEDERIIISETWDNVMCAQAIRGCMLVTHSFIRKYIILPLLIIAKNIGRILLFQLSEWDEDFKDWNREMHVKCTYNGVQLSETEFPQNWLKDGIQIKILFPFSLKPWRESKATPSTGGLMKEKKRKNDDFCFLTVWGMEAELPFGPPRNRPSFFKPIFEELDTNIRKVENQSFVFKEKTKDFLKKKTGWVTKIVLLKNKIRNFFTKVNPNLLFGLKKVYEPSENQKDSIISNKITHESTVQIPSSNWTNYSPIEKKMKDLSDRTITTRSQIERITKDKQKGFLTSDINIRSNETSCNAKRTELQKDILRIAKKRSIRFIRKLHSFVKSFIERIYLDIFLCTINIPRINLQLFFESIKKILNKSISNDERNKEKIDETNQNTIHFISTIRNSFSNSNLNNKSKIYWDFSLLSQAYVLYKLSQTQVIKRYQLKSVLQYHRAYPFLKDRIKDLFGTPRIVHAKSRPKKLPISRINAWKNWLRGHYQYNLSQTRWSELVPKKWREKFNQRTIKNKYSRKLNSSEKEKNQQAHYAKEISYVVDSLSSQKGKLKKDYRYDLLSHKYINSNYEDREYSDISRLSLQINGDREIPYDYNRQESDYVLVGLPISDYLGEEYFIGVDKNSDRKYFDRRILRFDLRKDLNIKTQINRDTETNMNKNGTNNYPAIGKKNPFSLPIHQEINSSKKKKQKFFDWMGMREEILYRPISNLEPWFFPEFVLRYDAYKSKPRIISIKSLLLDSQKDERNEIISKTKNINKKNQKKDLSNQKKHLEVENQEKEDFRQVDLRPNPTNQRDPIVSDTRNQQKDIEEDSVGSGVKKRRKKKKFKSKKEAELDFFLKKYLLFQLRWDELLNKKMMTNIKVYCLLLRLKNLKEIAISSIERGEMCLDLMLMQKDLSLRELIKKGIFIIEPIRLSRKWDGKLIMYQTIGISLVAENKDPINIRCRKKGYADENSFNKSVRQQEKMLVDRDENDYDLLVPENILSPRRRRELRILICFNSGNESAVDGNSVFYNNKNVESCRQFLDEDKHLDTDAKKFMKLKFFLWPNYRLEDLACMNRYWFDTTNGSRFSMLRIHMYPRFLISWW</sequence>
<name>TI214_ACOCL</name>
<evidence type="ECO:0000250" key="1">
    <source>
        <dbReference type="UniProtKB" id="P56785"/>
    </source>
</evidence>
<evidence type="ECO:0000255" key="2"/>
<evidence type="ECO:0000256" key="3">
    <source>
        <dbReference type="SAM" id="MobiDB-lite"/>
    </source>
</evidence>
<evidence type="ECO:0000305" key="4"/>
<accession>Q3V4X6</accession>